<evidence type="ECO:0000255" key="1">
    <source>
        <dbReference type="HAMAP-Rule" id="MF_00832"/>
    </source>
</evidence>
<feature type="chain" id="PRO_0000402975" description="Putative carbamate hydrolase RutD">
    <location>
        <begin position="1"/>
        <end position="259"/>
    </location>
</feature>
<feature type="domain" description="AB hydrolase-1" evidence="1">
    <location>
        <begin position="16"/>
        <end position="118"/>
    </location>
</feature>
<comment type="function">
    <text evidence="1">Involved in pyrimidine catabolism. May facilitate the hydrolysis of carbamate, a reaction that can also occur spontaneously.</text>
</comment>
<comment type="catalytic activity">
    <reaction evidence="1">
        <text>carbamate + 2 H(+) = NH4(+) + CO2</text>
        <dbReference type="Rhea" id="RHEA:15649"/>
        <dbReference type="ChEBI" id="CHEBI:13941"/>
        <dbReference type="ChEBI" id="CHEBI:15378"/>
        <dbReference type="ChEBI" id="CHEBI:16526"/>
        <dbReference type="ChEBI" id="CHEBI:28938"/>
    </reaction>
</comment>
<comment type="similarity">
    <text evidence="1">Belongs to the AB hydrolase superfamily. Hydrolase RutD family.</text>
</comment>
<keyword id="KW-0378">Hydrolase</keyword>
<accession>B1M5I5</accession>
<protein>
    <recommendedName>
        <fullName evidence="1">Putative carbamate hydrolase RutD</fullName>
        <ecNumber evidence="1">3.5.1.-</ecNumber>
    </recommendedName>
    <alternativeName>
        <fullName evidence="1">Aminohydrolase</fullName>
    </alternativeName>
</protein>
<organism>
    <name type="scientific">Methylobacterium radiotolerans (strain ATCC 27329 / DSM 1819 / JCM 2831 / NBRC 15690 / NCIMB 10815 / 0-1)</name>
    <dbReference type="NCBI Taxonomy" id="426355"/>
    <lineage>
        <taxon>Bacteria</taxon>
        <taxon>Pseudomonadati</taxon>
        <taxon>Pseudomonadota</taxon>
        <taxon>Alphaproteobacteria</taxon>
        <taxon>Hyphomicrobiales</taxon>
        <taxon>Methylobacteriaceae</taxon>
        <taxon>Methylobacterium</taxon>
    </lineage>
</organism>
<proteinExistence type="inferred from homology"/>
<reference key="1">
    <citation type="submission" date="2008-03" db="EMBL/GenBank/DDBJ databases">
        <title>Complete sequence of chromosome of Methylobacterium radiotolerans JCM 2831.</title>
        <authorList>
            <consortium name="US DOE Joint Genome Institute"/>
            <person name="Copeland A."/>
            <person name="Lucas S."/>
            <person name="Lapidus A."/>
            <person name="Glavina del Rio T."/>
            <person name="Dalin E."/>
            <person name="Tice H."/>
            <person name="Bruce D."/>
            <person name="Goodwin L."/>
            <person name="Pitluck S."/>
            <person name="Kiss H."/>
            <person name="Brettin T."/>
            <person name="Detter J.C."/>
            <person name="Han C."/>
            <person name="Kuske C.R."/>
            <person name="Schmutz J."/>
            <person name="Larimer F."/>
            <person name="Land M."/>
            <person name="Hauser L."/>
            <person name="Kyrpides N."/>
            <person name="Mikhailova N."/>
            <person name="Marx C.J."/>
            <person name="Richardson P."/>
        </authorList>
    </citation>
    <scope>NUCLEOTIDE SEQUENCE [LARGE SCALE GENOMIC DNA]</scope>
    <source>
        <strain>ATCC 27329 / DSM 1819 / JCM 2831 / NBRC 15690 / NCIMB 10815 / 0-1</strain>
    </source>
</reference>
<dbReference type="EC" id="3.5.1.-" evidence="1"/>
<dbReference type="EMBL" id="CP001001">
    <property type="protein sequence ID" value="ACB23576.1"/>
    <property type="molecule type" value="Genomic_DNA"/>
</dbReference>
<dbReference type="SMR" id="B1M5I5"/>
<dbReference type="STRING" id="426355.Mrad2831_1581"/>
<dbReference type="ESTHER" id="metrj-rutd">
    <property type="family name" value="RutD"/>
</dbReference>
<dbReference type="KEGG" id="mrd:Mrad2831_1581"/>
<dbReference type="PATRIC" id="fig|426355.14.peg.1619"/>
<dbReference type="eggNOG" id="COG2267">
    <property type="taxonomic scope" value="Bacteria"/>
</dbReference>
<dbReference type="HOGENOM" id="CLU_020336_50_1_5"/>
<dbReference type="Proteomes" id="UP000006589">
    <property type="component" value="Chromosome"/>
</dbReference>
<dbReference type="GO" id="GO:0016020">
    <property type="term" value="C:membrane"/>
    <property type="evidence" value="ECO:0007669"/>
    <property type="project" value="TreeGrafter"/>
</dbReference>
<dbReference type="GO" id="GO:0016811">
    <property type="term" value="F:hydrolase activity, acting on carbon-nitrogen (but not peptide) bonds, in linear amides"/>
    <property type="evidence" value="ECO:0007669"/>
    <property type="project" value="InterPro"/>
</dbReference>
<dbReference type="GO" id="GO:0047372">
    <property type="term" value="F:monoacylglycerol lipase activity"/>
    <property type="evidence" value="ECO:0007669"/>
    <property type="project" value="TreeGrafter"/>
</dbReference>
<dbReference type="GO" id="GO:0046464">
    <property type="term" value="P:acylglycerol catabolic process"/>
    <property type="evidence" value="ECO:0007669"/>
    <property type="project" value="TreeGrafter"/>
</dbReference>
<dbReference type="GO" id="GO:0019740">
    <property type="term" value="P:nitrogen utilization"/>
    <property type="evidence" value="ECO:0007669"/>
    <property type="project" value="UniProtKB-UniRule"/>
</dbReference>
<dbReference type="GO" id="GO:0006212">
    <property type="term" value="P:uracil catabolic process"/>
    <property type="evidence" value="ECO:0007669"/>
    <property type="project" value="UniProtKB-UniRule"/>
</dbReference>
<dbReference type="Gene3D" id="3.40.50.1820">
    <property type="entry name" value="alpha/beta hydrolase"/>
    <property type="match status" value="1"/>
</dbReference>
<dbReference type="HAMAP" id="MF_00832">
    <property type="entry name" value="RutD"/>
    <property type="match status" value="1"/>
</dbReference>
<dbReference type="InterPro" id="IPR000073">
    <property type="entry name" value="AB_hydrolase_1"/>
</dbReference>
<dbReference type="InterPro" id="IPR029058">
    <property type="entry name" value="AB_hydrolase_fold"/>
</dbReference>
<dbReference type="InterPro" id="IPR050266">
    <property type="entry name" value="AB_hydrolase_sf"/>
</dbReference>
<dbReference type="InterPro" id="IPR000639">
    <property type="entry name" value="Epox_hydrolase-like"/>
</dbReference>
<dbReference type="InterPro" id="IPR019913">
    <property type="entry name" value="Pyrimidine_utilisation_RutD"/>
</dbReference>
<dbReference type="NCBIfam" id="TIGR03611">
    <property type="entry name" value="RutD"/>
    <property type="match status" value="1"/>
</dbReference>
<dbReference type="PANTHER" id="PTHR43798">
    <property type="entry name" value="MONOACYLGLYCEROL LIPASE"/>
    <property type="match status" value="1"/>
</dbReference>
<dbReference type="PANTHER" id="PTHR43798:SF5">
    <property type="entry name" value="MONOACYLGLYCEROL LIPASE ABHD6"/>
    <property type="match status" value="1"/>
</dbReference>
<dbReference type="Pfam" id="PF00561">
    <property type="entry name" value="Abhydrolase_1"/>
    <property type="match status" value="1"/>
</dbReference>
<dbReference type="PRINTS" id="PR00111">
    <property type="entry name" value="ABHYDROLASE"/>
</dbReference>
<dbReference type="PRINTS" id="PR00412">
    <property type="entry name" value="EPOXHYDRLASE"/>
</dbReference>
<dbReference type="SUPFAM" id="SSF53474">
    <property type="entry name" value="alpha/beta-Hydrolases"/>
    <property type="match status" value="1"/>
</dbReference>
<gene>
    <name evidence="1" type="primary">rutD</name>
    <name type="ordered locus">Mrad2831_1581</name>
</gene>
<sequence>MGPLHHAVAGPAGGRPVLLSPGLGGAAGYFAPQMAALTARFRVVTYDHRGTGRSPGRLAPDHDVPAMARDARAVLDAAGIERADVVGHALGGLIALQMALDAPDRVGRVVVINGWDALDPATRRCFAARRAILAGGGPEAFVRAQAIFLYPAAWLSAQAERVEADEAQALAHFPGAETVLTRIAALEGFAIADRLGAIGHETLVMAARDDVLVPYTRSERLAAALPNARLALAPEGGHAHSVTRPEAFNRALLDFLDRD</sequence>
<name>RUTD_METRJ</name>